<keyword id="KW-0472">Membrane</keyword>
<keyword id="KW-1185">Reference proteome</keyword>
<keyword id="KW-0812">Transmembrane</keyword>
<keyword id="KW-1133">Transmembrane helix</keyword>
<keyword id="KW-0813">Transport</keyword>
<evidence type="ECO:0000255" key="1"/>
<evidence type="ECO:0000305" key="2"/>
<feature type="chain" id="PRO_0000317403" description="Probable purine permease 16">
    <location>
        <begin position="1"/>
        <end position="383"/>
    </location>
</feature>
<feature type="transmembrane region" description="Helical" evidence="1">
    <location>
        <begin position="30"/>
        <end position="50"/>
    </location>
</feature>
<feature type="transmembrane region" description="Helical" evidence="1">
    <location>
        <begin position="72"/>
        <end position="92"/>
    </location>
</feature>
<feature type="transmembrane region" description="Helical" evidence="1">
    <location>
        <begin position="113"/>
        <end position="133"/>
    </location>
</feature>
<feature type="transmembrane region" description="Helical" evidence="1">
    <location>
        <begin position="138"/>
        <end position="158"/>
    </location>
</feature>
<feature type="transmembrane region" description="Helical" evidence="1">
    <location>
        <begin position="166"/>
        <end position="186"/>
    </location>
</feature>
<feature type="transmembrane region" description="Helical" evidence="1">
    <location>
        <begin position="203"/>
        <end position="223"/>
    </location>
</feature>
<feature type="transmembrane region" description="Helical" evidence="1">
    <location>
        <begin position="247"/>
        <end position="267"/>
    </location>
</feature>
<feature type="transmembrane region" description="Helical" evidence="1">
    <location>
        <begin position="297"/>
        <end position="317"/>
    </location>
</feature>
<feature type="transmembrane region" description="Helical" evidence="1">
    <location>
        <begin position="322"/>
        <end position="342"/>
    </location>
</feature>
<feature type="transmembrane region" description="Helical" evidence="1">
    <location>
        <begin position="346"/>
        <end position="363"/>
    </location>
</feature>
<feature type="sequence conflict" description="In Ref. 3; BX815869." evidence="2" ref="3">
    <original>F</original>
    <variation>L</variation>
    <location>
        <position position="179"/>
    </location>
</feature>
<reference key="1">
    <citation type="journal article" date="2000" name="Nature">
        <title>Sequence and analysis of chromosome 1 of the plant Arabidopsis thaliana.</title>
        <authorList>
            <person name="Theologis A."/>
            <person name="Ecker J.R."/>
            <person name="Palm C.J."/>
            <person name="Federspiel N.A."/>
            <person name="Kaul S."/>
            <person name="White O."/>
            <person name="Alonso J."/>
            <person name="Altafi H."/>
            <person name="Araujo R."/>
            <person name="Bowman C.L."/>
            <person name="Brooks S.Y."/>
            <person name="Buehler E."/>
            <person name="Chan A."/>
            <person name="Chao Q."/>
            <person name="Chen H."/>
            <person name="Cheuk R.F."/>
            <person name="Chin C.W."/>
            <person name="Chung M.K."/>
            <person name="Conn L."/>
            <person name="Conway A.B."/>
            <person name="Conway A.R."/>
            <person name="Creasy T.H."/>
            <person name="Dewar K."/>
            <person name="Dunn P."/>
            <person name="Etgu P."/>
            <person name="Feldblyum T.V."/>
            <person name="Feng J.-D."/>
            <person name="Fong B."/>
            <person name="Fujii C.Y."/>
            <person name="Gill J.E."/>
            <person name="Goldsmith A.D."/>
            <person name="Haas B."/>
            <person name="Hansen N.F."/>
            <person name="Hughes B."/>
            <person name="Huizar L."/>
            <person name="Hunter J.L."/>
            <person name="Jenkins J."/>
            <person name="Johnson-Hopson C."/>
            <person name="Khan S."/>
            <person name="Khaykin E."/>
            <person name="Kim C.J."/>
            <person name="Koo H.L."/>
            <person name="Kremenetskaia I."/>
            <person name="Kurtz D.B."/>
            <person name="Kwan A."/>
            <person name="Lam B."/>
            <person name="Langin-Hooper S."/>
            <person name="Lee A."/>
            <person name="Lee J.M."/>
            <person name="Lenz C.A."/>
            <person name="Li J.H."/>
            <person name="Li Y.-P."/>
            <person name="Lin X."/>
            <person name="Liu S.X."/>
            <person name="Liu Z.A."/>
            <person name="Luros J.S."/>
            <person name="Maiti R."/>
            <person name="Marziali A."/>
            <person name="Militscher J."/>
            <person name="Miranda M."/>
            <person name="Nguyen M."/>
            <person name="Nierman W.C."/>
            <person name="Osborne B.I."/>
            <person name="Pai G."/>
            <person name="Peterson J."/>
            <person name="Pham P.K."/>
            <person name="Rizzo M."/>
            <person name="Rooney T."/>
            <person name="Rowley D."/>
            <person name="Sakano H."/>
            <person name="Salzberg S.L."/>
            <person name="Schwartz J.R."/>
            <person name="Shinn P."/>
            <person name="Southwick A.M."/>
            <person name="Sun H."/>
            <person name="Tallon L.J."/>
            <person name="Tambunga G."/>
            <person name="Toriumi M.J."/>
            <person name="Town C.D."/>
            <person name="Utterback T."/>
            <person name="Van Aken S."/>
            <person name="Vaysberg M."/>
            <person name="Vysotskaia V.S."/>
            <person name="Walker M."/>
            <person name="Wu D."/>
            <person name="Yu G."/>
            <person name="Fraser C.M."/>
            <person name="Venter J.C."/>
            <person name="Davis R.W."/>
        </authorList>
    </citation>
    <scope>NUCLEOTIDE SEQUENCE [LARGE SCALE GENOMIC DNA]</scope>
    <source>
        <strain>cv. Columbia</strain>
    </source>
</reference>
<reference key="2">
    <citation type="journal article" date="2017" name="Plant J.">
        <title>Araport11: a complete reannotation of the Arabidopsis thaliana reference genome.</title>
        <authorList>
            <person name="Cheng C.Y."/>
            <person name="Krishnakumar V."/>
            <person name="Chan A.P."/>
            <person name="Thibaud-Nissen F."/>
            <person name="Schobel S."/>
            <person name="Town C.D."/>
        </authorList>
    </citation>
    <scope>GENOME REANNOTATION</scope>
    <source>
        <strain>cv. Columbia</strain>
    </source>
</reference>
<reference key="3">
    <citation type="journal article" date="2004" name="Genome Res.">
        <title>Whole genome sequence comparisons and 'full-length' cDNA sequences: a combined approach to evaluate and improve Arabidopsis genome annotation.</title>
        <authorList>
            <person name="Castelli V."/>
            <person name="Aury J.-M."/>
            <person name="Jaillon O."/>
            <person name="Wincker P."/>
            <person name="Clepet C."/>
            <person name="Menard M."/>
            <person name="Cruaud C."/>
            <person name="Quetier F."/>
            <person name="Scarpelli C."/>
            <person name="Schaechter V."/>
            <person name="Temple G."/>
            <person name="Caboche M."/>
            <person name="Weissenbach J."/>
            <person name="Salanoubat M."/>
        </authorList>
    </citation>
    <scope>NUCLEOTIDE SEQUENCE [LARGE SCALE MRNA]</scope>
    <source>
        <strain>cv. Columbia</strain>
    </source>
</reference>
<reference key="4">
    <citation type="journal article" date="2000" name="Plant Cell">
        <title>A new family of high-affinity transporters for adenine, cytosine, and purine derivatives in Arabidopsis.</title>
        <authorList>
            <person name="Gillissen B."/>
            <person name="Buerkle L."/>
            <person name="Andre B."/>
            <person name="Kuehn C."/>
            <person name="Rentsch D."/>
            <person name="Brandl B."/>
            <person name="Frommer W.B."/>
        </authorList>
    </citation>
    <scope>GENE FAMILY</scope>
    <scope>NOMENCLATURE</scope>
</reference>
<proteinExistence type="evidence at transcript level"/>
<protein>
    <recommendedName>
        <fullName>Probable purine permease 16</fullName>
        <shortName>AtPUP16</shortName>
    </recommendedName>
</protein>
<gene>
    <name type="primary">PUP16</name>
    <name type="ordered locus">At1g09860</name>
    <name type="ORF">F21M12.25</name>
</gene>
<comment type="subcellular location">
    <subcellularLocation>
        <location evidence="2">Membrane</location>
        <topology evidence="2">Multi-pass membrane protein</topology>
    </subcellularLocation>
</comment>
<comment type="similarity">
    <text evidence="2">Belongs to the purine permeases (TC 2.A.7.14) family.</text>
</comment>
<accession>O04508</accession>
<sequence length="383" mass="43225">MEEFQGPEPRGQMMSENPRSLELNQRKWWISVFICGFLIFAGDSLVMLLLNFFYVQDNRSESDQDRQYKGTWTQALIQNAAFPILIPFFFILSSPKPNPETVSNQTNNGWFRVLSLYVSLGVLVSVYSKLYALGKLYVGWGILLSTQLILTSLFSAFINRLKFNRWIIISIIFTLGADFFGGPAFAGTPNEDETDPYDIKAWLILIFPTLAFSLSLCLMQLGFDKVLVKTKRYGNKKVFRMVLEMQICVSFIATLICTVGLFASGEFKELKGDSERFKKGKTYYILSLVGLALSWQVWAVGLLGLVLLVSGLFADVVHMGASPVVALLVVLAFDFMDDEFGWQRRGALLGAVLALASYFYSLHTKKKKEIAELNKRENNNSEA</sequence>
<name>PUP16_ARATH</name>
<organism>
    <name type="scientific">Arabidopsis thaliana</name>
    <name type="common">Mouse-ear cress</name>
    <dbReference type="NCBI Taxonomy" id="3702"/>
    <lineage>
        <taxon>Eukaryota</taxon>
        <taxon>Viridiplantae</taxon>
        <taxon>Streptophyta</taxon>
        <taxon>Embryophyta</taxon>
        <taxon>Tracheophyta</taxon>
        <taxon>Spermatophyta</taxon>
        <taxon>Magnoliopsida</taxon>
        <taxon>eudicotyledons</taxon>
        <taxon>Gunneridae</taxon>
        <taxon>Pentapetalae</taxon>
        <taxon>rosids</taxon>
        <taxon>malvids</taxon>
        <taxon>Brassicales</taxon>
        <taxon>Brassicaceae</taxon>
        <taxon>Camelineae</taxon>
        <taxon>Arabidopsis</taxon>
    </lineage>
</organism>
<dbReference type="EMBL" id="AC000132">
    <property type="protein sequence ID" value="AAB60739.1"/>
    <property type="molecule type" value="Genomic_DNA"/>
</dbReference>
<dbReference type="EMBL" id="CP002684">
    <property type="protein sequence ID" value="AEE28508.1"/>
    <property type="molecule type" value="Genomic_DNA"/>
</dbReference>
<dbReference type="EMBL" id="BX815869">
    <property type="status" value="NOT_ANNOTATED_CDS"/>
    <property type="molecule type" value="mRNA"/>
</dbReference>
<dbReference type="PIR" id="H86232">
    <property type="entry name" value="H86232"/>
</dbReference>
<dbReference type="RefSeq" id="NP_172457.1">
    <property type="nucleotide sequence ID" value="NM_100860.3"/>
</dbReference>
<dbReference type="BioGRID" id="22759">
    <property type="interactions" value="2"/>
</dbReference>
<dbReference type="IntAct" id="O04508">
    <property type="interactions" value="1"/>
</dbReference>
<dbReference type="STRING" id="3702.O04508"/>
<dbReference type="PaxDb" id="3702-AT1G09860.1"/>
<dbReference type="EnsemblPlants" id="AT1G09860.1">
    <property type="protein sequence ID" value="AT1G09860.1"/>
    <property type="gene ID" value="AT1G09860"/>
</dbReference>
<dbReference type="GeneID" id="837518"/>
<dbReference type="Gramene" id="AT1G09860.1">
    <property type="protein sequence ID" value="AT1G09860.1"/>
    <property type="gene ID" value="AT1G09860"/>
</dbReference>
<dbReference type="KEGG" id="ath:AT1G09860"/>
<dbReference type="Araport" id="AT1G09860"/>
<dbReference type="TAIR" id="AT1G09860">
    <property type="gene designation" value="PUP16"/>
</dbReference>
<dbReference type="HOGENOM" id="CLU_043459_2_1_1"/>
<dbReference type="InParanoid" id="O04508"/>
<dbReference type="OMA" id="YVQDNRS"/>
<dbReference type="OrthoDB" id="1087464at2759"/>
<dbReference type="PhylomeDB" id="O04508"/>
<dbReference type="PRO" id="PR:O04508"/>
<dbReference type="Proteomes" id="UP000006548">
    <property type="component" value="Chromosome 1"/>
</dbReference>
<dbReference type="ExpressionAtlas" id="O04508">
    <property type="expression patterns" value="baseline and differential"/>
</dbReference>
<dbReference type="GO" id="GO:0016020">
    <property type="term" value="C:membrane"/>
    <property type="evidence" value="ECO:0000304"/>
    <property type="project" value="TAIR"/>
</dbReference>
<dbReference type="GO" id="GO:0005345">
    <property type="term" value="F:purine nucleobase transmembrane transporter activity"/>
    <property type="evidence" value="ECO:0000304"/>
    <property type="project" value="TAIR"/>
</dbReference>
<dbReference type="GO" id="GO:0015211">
    <property type="term" value="F:purine nucleoside transmembrane transporter activity"/>
    <property type="evidence" value="ECO:0007669"/>
    <property type="project" value="InterPro"/>
</dbReference>
<dbReference type="GO" id="GO:0006863">
    <property type="term" value="P:purine nucleobase transport"/>
    <property type="evidence" value="ECO:0000304"/>
    <property type="project" value="TAIR"/>
</dbReference>
<dbReference type="InterPro" id="IPR030182">
    <property type="entry name" value="PUP_plant"/>
</dbReference>
<dbReference type="PANTHER" id="PTHR31376">
    <property type="entry name" value="OS09G0467300 PROTEIN-RELATED"/>
    <property type="match status" value="1"/>
</dbReference>
<dbReference type="PANTHER" id="PTHR31376:SF41">
    <property type="entry name" value="PURINE PERMEASE 16-RELATED"/>
    <property type="match status" value="1"/>
</dbReference>
<dbReference type="Pfam" id="PF16913">
    <property type="entry name" value="PUNUT"/>
    <property type="match status" value="1"/>
</dbReference>